<dbReference type="InParanoid" id="P80812"/>
<dbReference type="Proteomes" id="UP000004994">
    <property type="component" value="Unplaced"/>
</dbReference>
<dbReference type="GO" id="GO:0005576">
    <property type="term" value="C:extracellular region"/>
    <property type="evidence" value="ECO:0007669"/>
    <property type="project" value="UniProtKB-KW"/>
</dbReference>
<accession>P80812</accession>
<sequence>ANDPDFPYTVQANRP</sequence>
<protein>
    <recommendedName>
        <fullName>40 kDa cell wall protein</fullName>
    </recommendedName>
</protein>
<name>CWP16_SOLLC</name>
<feature type="chain" id="PRO_0000079677" description="40 kDa cell wall protein">
    <location>
        <begin position="1"/>
        <end position="15" status="greater than"/>
    </location>
</feature>
<feature type="non-terminal residue" evidence="2">
    <location>
        <position position="15"/>
    </location>
</feature>
<evidence type="ECO:0000269" key="1">
    <source>
    </source>
</evidence>
<evidence type="ECO:0000303" key="2">
    <source>
    </source>
</evidence>
<evidence type="ECO:0000305" key="3"/>
<organism>
    <name type="scientific">Solanum lycopersicum</name>
    <name type="common">Tomato</name>
    <name type="synonym">Lycopersicon esculentum</name>
    <dbReference type="NCBI Taxonomy" id="4081"/>
    <lineage>
        <taxon>Eukaryota</taxon>
        <taxon>Viridiplantae</taxon>
        <taxon>Streptophyta</taxon>
        <taxon>Embryophyta</taxon>
        <taxon>Tracheophyta</taxon>
        <taxon>Spermatophyta</taxon>
        <taxon>Magnoliopsida</taxon>
        <taxon>eudicotyledons</taxon>
        <taxon>Gunneridae</taxon>
        <taxon>Pentapetalae</taxon>
        <taxon>asterids</taxon>
        <taxon>lamiids</taxon>
        <taxon>Solanales</taxon>
        <taxon>Solanaceae</taxon>
        <taxon>Solanoideae</taxon>
        <taxon>Solaneae</taxon>
        <taxon>Solanum</taxon>
        <taxon>Solanum subgen. Lycopersicon</taxon>
    </lineage>
</organism>
<reference evidence="3" key="1">
    <citation type="journal article" date="1997" name="J. Biol. Chem.">
        <title>Differential extraction and protein sequencing reveals major differences in patterns of primary cell wall proteins from plants.</title>
        <authorList>
            <person name="Robertson D."/>
            <person name="Mitchell G.P."/>
            <person name="Gilroy J.S."/>
            <person name="Gerrish C."/>
            <person name="Bolwell G.P."/>
            <person name="Slabas A.R."/>
        </authorList>
    </citation>
    <scope>PROTEIN SEQUENCE</scope>
    <scope>SUBCELLULAR LOCATION</scope>
</reference>
<comment type="subcellular location">
    <subcellularLocation>
        <location evidence="1">Secreted</location>
        <location evidence="1">Cell wall</location>
    </subcellularLocation>
</comment>
<keyword id="KW-0134">Cell wall</keyword>
<keyword id="KW-0903">Direct protein sequencing</keyword>
<keyword id="KW-1185">Reference proteome</keyword>
<keyword id="KW-0964">Secreted</keyword>
<proteinExistence type="evidence at protein level"/>